<accession>Q8ZIX7</accession>
<accession>Q0WJV2</accession>
<gene>
    <name evidence="1" type="primary">frdC</name>
    <name type="ordered locus">YPO0358</name>
    <name type="ordered locus">y0615</name>
    <name type="ordered locus">YP_0513</name>
</gene>
<protein>
    <recommendedName>
        <fullName evidence="1">Fumarate reductase subunit C</fullName>
    </recommendedName>
    <alternativeName>
        <fullName evidence="1">Fumarate reductase 15 kDa hydrophobic protein</fullName>
    </alternativeName>
    <alternativeName>
        <fullName evidence="1">Quinol-fumarate reductase subunit C</fullName>
        <shortName evidence="1">QFR subunit C</shortName>
    </alternativeName>
</protein>
<dbReference type="EMBL" id="AL590842">
    <property type="protein sequence ID" value="CAL19040.1"/>
    <property type="molecule type" value="Genomic_DNA"/>
</dbReference>
<dbReference type="EMBL" id="AE009952">
    <property type="protein sequence ID" value="AAM84203.1"/>
    <property type="molecule type" value="Genomic_DNA"/>
</dbReference>
<dbReference type="EMBL" id="AE017042">
    <property type="protein sequence ID" value="AAS60783.1"/>
    <property type="molecule type" value="Genomic_DNA"/>
</dbReference>
<dbReference type="PIR" id="AF0044">
    <property type="entry name" value="AF0044"/>
</dbReference>
<dbReference type="RefSeq" id="WP_002209135.1">
    <property type="nucleotide sequence ID" value="NZ_WUCM01000014.1"/>
</dbReference>
<dbReference type="RefSeq" id="YP_002345436.1">
    <property type="nucleotide sequence ID" value="NC_003143.1"/>
</dbReference>
<dbReference type="SMR" id="Q8ZIX7"/>
<dbReference type="STRING" id="214092.YPO0358"/>
<dbReference type="PaxDb" id="214092-YPO0358"/>
<dbReference type="DNASU" id="1145562"/>
<dbReference type="EnsemblBacteria" id="AAS60783">
    <property type="protein sequence ID" value="AAS60783"/>
    <property type="gene ID" value="YP_0513"/>
</dbReference>
<dbReference type="GeneID" id="57974250"/>
<dbReference type="KEGG" id="ype:YPO0358"/>
<dbReference type="KEGG" id="ypk:y0615"/>
<dbReference type="KEGG" id="ypm:YP_0513"/>
<dbReference type="PATRIC" id="fig|1028802.3.peg.164"/>
<dbReference type="eggNOG" id="COG3029">
    <property type="taxonomic scope" value="Bacteria"/>
</dbReference>
<dbReference type="HOGENOM" id="CLU_156492_0_0_6"/>
<dbReference type="OMA" id="MTATWWQ"/>
<dbReference type="OrthoDB" id="8909678at2"/>
<dbReference type="Proteomes" id="UP000000815">
    <property type="component" value="Chromosome"/>
</dbReference>
<dbReference type="Proteomes" id="UP000001019">
    <property type="component" value="Chromosome"/>
</dbReference>
<dbReference type="Proteomes" id="UP000002490">
    <property type="component" value="Chromosome"/>
</dbReference>
<dbReference type="GO" id="GO:0045283">
    <property type="term" value="C:fumarate reductase complex"/>
    <property type="evidence" value="ECO:0007669"/>
    <property type="project" value="UniProtKB-UniRule"/>
</dbReference>
<dbReference type="GO" id="GO:0005886">
    <property type="term" value="C:plasma membrane"/>
    <property type="evidence" value="ECO:0007669"/>
    <property type="project" value="UniProtKB-SubCell"/>
</dbReference>
<dbReference type="GO" id="GO:0000104">
    <property type="term" value="F:succinate dehydrogenase activity"/>
    <property type="evidence" value="ECO:0007669"/>
    <property type="project" value="UniProtKB-UniRule"/>
</dbReference>
<dbReference type="CDD" id="cd00546">
    <property type="entry name" value="QFR_TypeD_subunitC"/>
    <property type="match status" value="1"/>
</dbReference>
<dbReference type="Gene3D" id="1.20.1300.10">
    <property type="entry name" value="Fumarate reductase/succinate dehydrogenase, transmembrane subunit"/>
    <property type="match status" value="1"/>
</dbReference>
<dbReference type="HAMAP" id="MF_00708">
    <property type="entry name" value="Fumarate_red_C"/>
    <property type="match status" value="1"/>
</dbReference>
<dbReference type="InterPro" id="IPR003510">
    <property type="entry name" value="Fumarate_red_C"/>
</dbReference>
<dbReference type="InterPro" id="IPR034804">
    <property type="entry name" value="SQR/QFR_C/D"/>
</dbReference>
<dbReference type="NCBIfam" id="NF003445">
    <property type="entry name" value="PRK04987.1"/>
    <property type="match status" value="1"/>
</dbReference>
<dbReference type="Pfam" id="PF02300">
    <property type="entry name" value="Fumarate_red_C"/>
    <property type="match status" value="1"/>
</dbReference>
<dbReference type="PIRSF" id="PIRSF000180">
    <property type="entry name" value="FrdC"/>
    <property type="match status" value="1"/>
</dbReference>
<dbReference type="SUPFAM" id="SSF81343">
    <property type="entry name" value="Fumarate reductase respiratory complex transmembrane subunits"/>
    <property type="match status" value="1"/>
</dbReference>
<reference key="1">
    <citation type="journal article" date="2001" name="Nature">
        <title>Genome sequence of Yersinia pestis, the causative agent of plague.</title>
        <authorList>
            <person name="Parkhill J."/>
            <person name="Wren B.W."/>
            <person name="Thomson N.R."/>
            <person name="Titball R.W."/>
            <person name="Holden M.T.G."/>
            <person name="Prentice M.B."/>
            <person name="Sebaihia M."/>
            <person name="James K.D."/>
            <person name="Churcher C.M."/>
            <person name="Mungall K.L."/>
            <person name="Baker S."/>
            <person name="Basham D."/>
            <person name="Bentley S.D."/>
            <person name="Brooks K."/>
            <person name="Cerdeno-Tarraga A.-M."/>
            <person name="Chillingworth T."/>
            <person name="Cronin A."/>
            <person name="Davies R.M."/>
            <person name="Davis P."/>
            <person name="Dougan G."/>
            <person name="Feltwell T."/>
            <person name="Hamlin N."/>
            <person name="Holroyd S."/>
            <person name="Jagels K."/>
            <person name="Karlyshev A.V."/>
            <person name="Leather S."/>
            <person name="Moule S."/>
            <person name="Oyston P.C.F."/>
            <person name="Quail M.A."/>
            <person name="Rutherford K.M."/>
            <person name="Simmonds M."/>
            <person name="Skelton J."/>
            <person name="Stevens K."/>
            <person name="Whitehead S."/>
            <person name="Barrell B.G."/>
        </authorList>
    </citation>
    <scope>NUCLEOTIDE SEQUENCE [LARGE SCALE GENOMIC DNA]</scope>
    <source>
        <strain>CO-92 / Biovar Orientalis</strain>
    </source>
</reference>
<reference key="2">
    <citation type="journal article" date="2002" name="J. Bacteriol.">
        <title>Genome sequence of Yersinia pestis KIM.</title>
        <authorList>
            <person name="Deng W."/>
            <person name="Burland V."/>
            <person name="Plunkett G. III"/>
            <person name="Boutin A."/>
            <person name="Mayhew G.F."/>
            <person name="Liss P."/>
            <person name="Perna N.T."/>
            <person name="Rose D.J."/>
            <person name="Mau B."/>
            <person name="Zhou S."/>
            <person name="Schwartz D.C."/>
            <person name="Fetherston J.D."/>
            <person name="Lindler L.E."/>
            <person name="Brubaker R.R."/>
            <person name="Plano G.V."/>
            <person name="Straley S.C."/>
            <person name="McDonough K.A."/>
            <person name="Nilles M.L."/>
            <person name="Matson J.S."/>
            <person name="Blattner F.R."/>
            <person name="Perry R.D."/>
        </authorList>
    </citation>
    <scope>NUCLEOTIDE SEQUENCE [LARGE SCALE GENOMIC DNA]</scope>
    <source>
        <strain>KIM10+ / Biovar Mediaevalis</strain>
    </source>
</reference>
<reference key="3">
    <citation type="journal article" date="2004" name="DNA Res.">
        <title>Complete genome sequence of Yersinia pestis strain 91001, an isolate avirulent to humans.</title>
        <authorList>
            <person name="Song Y."/>
            <person name="Tong Z."/>
            <person name="Wang J."/>
            <person name="Wang L."/>
            <person name="Guo Z."/>
            <person name="Han Y."/>
            <person name="Zhang J."/>
            <person name="Pei D."/>
            <person name="Zhou D."/>
            <person name="Qin H."/>
            <person name="Pang X."/>
            <person name="Han Y."/>
            <person name="Zhai J."/>
            <person name="Li M."/>
            <person name="Cui B."/>
            <person name="Qi Z."/>
            <person name="Jin L."/>
            <person name="Dai R."/>
            <person name="Chen F."/>
            <person name="Li S."/>
            <person name="Ye C."/>
            <person name="Du Z."/>
            <person name="Lin W."/>
            <person name="Wang J."/>
            <person name="Yu J."/>
            <person name="Yang H."/>
            <person name="Wang J."/>
            <person name="Huang P."/>
            <person name="Yang R."/>
        </authorList>
    </citation>
    <scope>NUCLEOTIDE SEQUENCE [LARGE SCALE GENOMIC DNA]</scope>
    <source>
        <strain>91001 / Biovar Mediaevalis</strain>
    </source>
</reference>
<evidence type="ECO:0000255" key="1">
    <source>
        <dbReference type="HAMAP-Rule" id="MF_00708"/>
    </source>
</evidence>
<name>FRDC_YERPE</name>
<feature type="chain" id="PRO_0000196541" description="Fumarate reductase subunit C">
    <location>
        <begin position="1"/>
        <end position="130"/>
    </location>
</feature>
<feature type="transmembrane region" description="Helical" evidence="1">
    <location>
        <begin position="30"/>
        <end position="50"/>
    </location>
</feature>
<feature type="transmembrane region" description="Helical" evidence="1">
    <location>
        <begin position="60"/>
        <end position="80"/>
    </location>
</feature>
<feature type="transmembrane region" description="Helical" evidence="1">
    <location>
        <begin position="110"/>
        <end position="130"/>
    </location>
</feature>
<sequence>MTTKRKAYVRTMAPNWWQQLGFYRFYMLREGTSIPAVWFSVLLIYGVFALKSGPAGWEGFVSFLQNPLVLFLNILTLFAALLHTKTWFELAPKAVNIIVKSEKMGPEPMIKALWVVTVVASAIILAVALL</sequence>
<comment type="function">
    <text evidence="1">Two distinct, membrane-bound, FAD-containing enzymes are responsible for the catalysis of fumarate and succinate interconversion; fumarate reductase is used in anaerobic growth, and succinate dehydrogenase is used in aerobic growth. Anchors the catalytic components of the fumarate reductase complex to the cell inner membrane, binds quinones.</text>
</comment>
<comment type="subunit">
    <text evidence="1">Part of an enzyme complex containing four subunits: a flavoprotein (FrdA), an iron-sulfur protein (FrdB), and two hydrophobic anchor proteins (FrdC and FrdD).</text>
</comment>
<comment type="subcellular location">
    <subcellularLocation>
        <location evidence="1">Cell inner membrane</location>
        <topology evidence="1">Multi-pass membrane protein</topology>
    </subcellularLocation>
</comment>
<comment type="similarity">
    <text evidence="1">Belongs to the FrdC family.</text>
</comment>
<keyword id="KW-0997">Cell inner membrane</keyword>
<keyword id="KW-1003">Cell membrane</keyword>
<keyword id="KW-0472">Membrane</keyword>
<keyword id="KW-1185">Reference proteome</keyword>
<keyword id="KW-0812">Transmembrane</keyword>
<keyword id="KW-1133">Transmembrane helix</keyword>
<proteinExistence type="inferred from homology"/>
<organism>
    <name type="scientific">Yersinia pestis</name>
    <dbReference type="NCBI Taxonomy" id="632"/>
    <lineage>
        <taxon>Bacteria</taxon>
        <taxon>Pseudomonadati</taxon>
        <taxon>Pseudomonadota</taxon>
        <taxon>Gammaproteobacteria</taxon>
        <taxon>Enterobacterales</taxon>
        <taxon>Yersiniaceae</taxon>
        <taxon>Yersinia</taxon>
    </lineage>
</organism>